<protein>
    <recommendedName>
        <fullName evidence="1">PTS system fructose-specific EIIB'BC component</fullName>
    </recommendedName>
    <domain>
        <recommendedName>
            <fullName evidence="1">PTS system fructose-specific EIIB component</fullName>
            <ecNumber evidence="1">2.7.1.202</ecNumber>
        </recommendedName>
        <alternativeName>
            <fullName evidence="1">EIII-Fru</fullName>
        </alternativeName>
        <alternativeName>
            <fullName evidence="1">Fructose-specific phosphotransferase enzyme IIB component</fullName>
        </alternativeName>
    </domain>
    <domain>
        <recommendedName>
            <fullName evidence="1">PTS system fructose-specific EIIC component</fullName>
        </recommendedName>
        <alternativeName>
            <fullName evidence="1">Fructose permease IIC component</fullName>
        </alternativeName>
    </domain>
</protein>
<proteinExistence type="evidence at transcript level"/>
<feature type="chain" id="PRO_5004328287" description="PTS system fructose-specific EIIB'BC component">
    <location>
        <begin position="1"/>
        <end position="580"/>
    </location>
</feature>
<feature type="transmembrane region" description="Helical" evidence="2">
    <location>
        <begin position="254"/>
        <end position="274"/>
    </location>
</feature>
<feature type="transmembrane region" description="Helical" evidence="2">
    <location>
        <begin position="292"/>
        <end position="312"/>
    </location>
</feature>
<feature type="transmembrane region" description="Helical" evidence="2">
    <location>
        <begin position="322"/>
        <end position="342"/>
    </location>
</feature>
<feature type="transmembrane region" description="Helical" evidence="2">
    <location>
        <begin position="367"/>
        <end position="387"/>
    </location>
</feature>
<feature type="transmembrane region" description="Helical" evidence="2">
    <location>
        <begin position="408"/>
        <end position="428"/>
    </location>
</feature>
<feature type="transmembrane region" description="Helical" evidence="2">
    <location>
        <begin position="448"/>
        <end position="468"/>
    </location>
</feature>
<feature type="transmembrane region" description="Helical" evidence="2">
    <location>
        <begin position="480"/>
        <end position="500"/>
    </location>
</feature>
<feature type="transmembrane region" description="Helical" evidence="2">
    <location>
        <begin position="507"/>
        <end position="527"/>
    </location>
</feature>
<feature type="transmembrane region" description="Helical" evidence="2">
    <location>
        <begin position="537"/>
        <end position="557"/>
    </location>
</feature>
<feature type="domain" description="PTS EIIB type-2 1" evidence="3">
    <location>
        <begin position="3"/>
        <end position="100"/>
    </location>
</feature>
<feature type="domain" description="PTS EIIB type-2 2" evidence="3">
    <location>
        <begin position="124"/>
        <end position="221"/>
    </location>
</feature>
<feature type="domain" description="PTS EIIC type-2" evidence="4">
    <location>
        <begin position="244"/>
        <end position="579"/>
    </location>
</feature>
<feature type="active site" description="Phosphocysteine intermediate; for EIIB activity" evidence="8">
    <location>
        <position position="11"/>
    </location>
</feature>
<feature type="active site" description="Phosphocysteine intermediate; for EIIB activity" evidence="1">
    <location>
        <position position="132"/>
    </location>
</feature>
<feature type="modified residue" description="Phosphocysteine; by EIIA" evidence="3">
    <location>
        <position position="11"/>
    </location>
</feature>
<feature type="modified residue" description="Phosphocysteine; by EIIA" evidence="3">
    <location>
        <position position="132"/>
    </location>
</feature>
<evidence type="ECO:0000250" key="1">
    <source>
        <dbReference type="UniProtKB" id="P20966"/>
    </source>
</evidence>
<evidence type="ECO:0000255" key="2"/>
<evidence type="ECO:0000255" key="3">
    <source>
        <dbReference type="PROSITE-ProRule" id="PRU00422"/>
    </source>
</evidence>
<evidence type="ECO:0000255" key="4">
    <source>
        <dbReference type="PROSITE-ProRule" id="PRU00427"/>
    </source>
</evidence>
<evidence type="ECO:0000269" key="5">
    <source>
    </source>
</evidence>
<evidence type="ECO:0000269" key="6">
    <source>
    </source>
</evidence>
<evidence type="ECO:0000303" key="7">
    <source>
    </source>
</evidence>
<evidence type="ECO:0000305" key="8"/>
<evidence type="ECO:0000312" key="9">
    <source>
        <dbReference type="EMBL" id="AAF96419.1"/>
    </source>
</evidence>
<comment type="function">
    <text evidence="1">The phosphoenolpyruvate-dependent sugar phosphotransferase system (sugar PTS), a major carbohydrate active transport system, catalyzes the phosphorylation of incoming sugar substrates concomitantly with their translocation across the cell membrane. The enzyme II FruAB PTS system is involved in fructose transport.</text>
</comment>
<comment type="catalytic activity">
    <reaction evidence="1">
        <text>D-fructose(out) + N(pros)-phospho-L-histidyl-[protein] = D-fructose 1-phosphate(in) + L-histidyl-[protein]</text>
        <dbReference type="Rhea" id="RHEA:49252"/>
        <dbReference type="Rhea" id="RHEA-COMP:9745"/>
        <dbReference type="Rhea" id="RHEA-COMP:9746"/>
        <dbReference type="ChEBI" id="CHEBI:29979"/>
        <dbReference type="ChEBI" id="CHEBI:37721"/>
        <dbReference type="ChEBI" id="CHEBI:58674"/>
        <dbReference type="ChEBI" id="CHEBI:64837"/>
        <dbReference type="EC" id="2.7.1.202"/>
    </reaction>
</comment>
<comment type="subcellular location">
    <subcellularLocation>
        <location evidence="4">Cell inner membrane</location>
        <topology evidence="4">Multi-pass membrane protein</topology>
    </subcellularLocation>
</comment>
<comment type="induction">
    <text evidence="5 6">Part of the fruBKA (fru) operon, which is induced in the presence of fructose via the FruR (Cra) regulatory protein (PubMed:33476373). Transcription is repressed by FruR in the absence of fructose (PubMed:33649152). CRP activates expression of the fru operon in the absence of glucose (PubMed:33649152). The two regulators can work independently to control the expression of the operon depending on carbon source availability (PubMed:33649152).</text>
</comment>
<comment type="domain">
    <text evidence="3">The PTS EIIB type-2 domain is phosphorylated by phospho-EIIA on a cysteinyl residue. Then, it transfers the phosphoryl group to the sugar substrate concomitantly with the sugar uptake processed by the PTS EIIC type-2 domain.</text>
</comment>
<comment type="domain">
    <text evidence="4">The EIIC type-2 domain forms the PTS system translocation channel and contains the specific substrate-binding site.</text>
</comment>
<comment type="disruption phenotype">
    <text evidence="5">Does not affect growth on fructose or on glucose.</text>
</comment>
<reference key="1">
    <citation type="journal article" date="2000" name="Nature">
        <title>DNA sequence of both chromosomes of the cholera pathogen Vibrio cholerae.</title>
        <authorList>
            <person name="Heidelberg J.F."/>
            <person name="Eisen J.A."/>
            <person name="Nelson W.C."/>
            <person name="Clayton R.A."/>
            <person name="Gwinn M.L."/>
            <person name="Dodson R.J."/>
            <person name="Haft D.H."/>
            <person name="Hickey E.K."/>
            <person name="Peterson J.D."/>
            <person name="Umayam L.A."/>
            <person name="Gill S.R."/>
            <person name="Nelson K.E."/>
            <person name="Read T.D."/>
            <person name="Tettelin H."/>
            <person name="Richardson D.L."/>
            <person name="Ermolaeva M.D."/>
            <person name="Vamathevan J.J."/>
            <person name="Bass S."/>
            <person name="Qin H."/>
            <person name="Dragoi I."/>
            <person name="Sellers P."/>
            <person name="McDonald L.A."/>
            <person name="Utterback T.R."/>
            <person name="Fleischmann R.D."/>
            <person name="Nierman W.C."/>
            <person name="White O."/>
            <person name="Salzberg S.L."/>
            <person name="Smith H.O."/>
            <person name="Colwell R.R."/>
            <person name="Mekalanos J.J."/>
            <person name="Venter J.C."/>
            <person name="Fraser C.M."/>
        </authorList>
    </citation>
    <scope>NUCLEOTIDE SEQUENCE [LARGE SCALE GENOMIC DNA]</scope>
    <source>
        <strain>ATCC 39315 / El Tor Inaba N16961</strain>
    </source>
</reference>
<reference key="2">
    <citation type="journal article" date="2021" name="Nucleic Acids Res.">
        <title>Vibrio cholerae FruR facilitates binding of RNA polymerase to the fru promoter in the presence of fructose 1-phosphate.</title>
        <authorList>
            <person name="Yoon C.K."/>
            <person name="Kang D."/>
            <person name="Kim M.K."/>
            <person name="Seok Y.J."/>
        </authorList>
    </citation>
    <scope>INDUCTION</scope>
    <scope>DISRUPTION PHENOTYPE</scope>
    <source>
        <strain>ATCC 39315 / El Tor Inaba N16961</strain>
    </source>
</reference>
<reference key="3">
    <citation type="journal article" date="2021" name="J. Bacteriol.">
        <title>Cra and cAMP receptor protein have opposing roles in the regulation of fruB in Vibrio cholerae.</title>
        <authorList>
            <person name="Beck C."/>
            <person name="Perry S."/>
            <person name="Stoebel D.M."/>
            <person name="Liu J.M."/>
        </authorList>
    </citation>
    <scope>INDUCTION</scope>
    <source>
        <strain>ATCC 39315 / El Tor Inaba N16961</strain>
    </source>
</reference>
<gene>
    <name evidence="7" type="primary">fruA</name>
    <name evidence="9" type="ordered locus">VC_A0516</name>
</gene>
<sequence length="580" mass="59645">MKMKIAIVTACPSGVANSIIAAGLLQQASKTLGWEAYIECHSTVIAGHTLSEEEINKADLVILAANGKIDMQRFVGKKVYQSPITACTSDPVGYLKQAAEQATELSSEQATRCDSPATASVSAKKIVAITACPTGVAHTFMAAEALEAEATRQGHQIKVETRGSVGAKNQLTEQEIAAADLVIIAADIDVPLDRFNGKKLYKTSTGLTLKKTAQELSNAFAQAKTFSSSANSATNEKAEEKKGVYKHLMTGVSHMLPVVVAGGLIIALSFVFGIEAFKEEGTLAAALMQIGGGSAFALMIPVLAGYIAFSIADRPGLAPGLIGGMLASSTGAGFLGGIVAGFLAGYSAKFIADKVQLPQSMAALKPILIIPFIASLFTGLVMIYVVGGPMSSIMSGMTSFLNNMGSTNAILLGIVLGAMMCFDLGGPVNKAAYTFGVGLLASQTYAPMAAIMAAGMVPALGMGLATFIAKDKFEAGEREAGKASFVLGLCFISEGAIPFAAKDPMRVIPACMVGGAVTGALSMLFGAKLMAPHGGLFVLLIPNAISPVLLYLVAIAVGTAITGFGYAMLKKSAQAKAVAA</sequence>
<dbReference type="EC" id="2.7.1.202" evidence="1"/>
<dbReference type="EMBL" id="AE003853">
    <property type="protein sequence ID" value="AAF96419.1"/>
    <property type="molecule type" value="Genomic_DNA"/>
</dbReference>
<dbReference type="PIR" id="B82450">
    <property type="entry name" value="B82450"/>
</dbReference>
<dbReference type="RefSeq" id="NP_232907.1">
    <property type="nucleotide sequence ID" value="NC_002506.1"/>
</dbReference>
<dbReference type="SMR" id="Q9KM72"/>
<dbReference type="STRING" id="243277.VC_A0516"/>
<dbReference type="DNASU" id="2612387"/>
<dbReference type="EnsemblBacteria" id="AAF96419">
    <property type="protein sequence ID" value="AAF96419"/>
    <property type="gene ID" value="VC_A0516"/>
</dbReference>
<dbReference type="KEGG" id="vch:VC_A0516"/>
<dbReference type="PATRIC" id="fig|243277.26.peg.3142"/>
<dbReference type="eggNOG" id="COG1299">
    <property type="taxonomic scope" value="Bacteria"/>
</dbReference>
<dbReference type="eggNOG" id="COG1445">
    <property type="taxonomic scope" value="Bacteria"/>
</dbReference>
<dbReference type="HOGENOM" id="CLU_013155_4_2_6"/>
<dbReference type="Proteomes" id="UP000000584">
    <property type="component" value="Chromosome 2"/>
</dbReference>
<dbReference type="GO" id="GO:0005886">
    <property type="term" value="C:plasma membrane"/>
    <property type="evidence" value="ECO:0000318"/>
    <property type="project" value="GO_Central"/>
</dbReference>
<dbReference type="GO" id="GO:0005351">
    <property type="term" value="F:carbohydrate:proton symporter activity"/>
    <property type="evidence" value="ECO:0007669"/>
    <property type="project" value="InterPro"/>
</dbReference>
<dbReference type="GO" id="GO:0016301">
    <property type="term" value="F:kinase activity"/>
    <property type="evidence" value="ECO:0007669"/>
    <property type="project" value="UniProtKB-KW"/>
</dbReference>
<dbReference type="GO" id="GO:0022877">
    <property type="term" value="F:protein-N(PI)-phosphohistidine-fructose phosphotransferase system transporter activity"/>
    <property type="evidence" value="ECO:0007669"/>
    <property type="project" value="InterPro"/>
</dbReference>
<dbReference type="GO" id="GO:0090563">
    <property type="term" value="F:protein-phosphocysteine-sugar phosphotransferase activity"/>
    <property type="evidence" value="ECO:0000318"/>
    <property type="project" value="GO_Central"/>
</dbReference>
<dbReference type="GO" id="GO:0009401">
    <property type="term" value="P:phosphoenolpyruvate-dependent sugar phosphotransferase system"/>
    <property type="evidence" value="ECO:0000318"/>
    <property type="project" value="GO_Central"/>
</dbReference>
<dbReference type="CDD" id="cd05569">
    <property type="entry name" value="PTS_IIB_fructose"/>
    <property type="match status" value="2"/>
</dbReference>
<dbReference type="FunFam" id="3.40.50.2300:FF:000014">
    <property type="entry name" value="PTS system fructose-like transporter subunit IIB"/>
    <property type="match status" value="1"/>
</dbReference>
<dbReference type="Gene3D" id="3.40.50.2300">
    <property type="match status" value="2"/>
</dbReference>
<dbReference type="InterPro" id="IPR050864">
    <property type="entry name" value="Bacterial_PTS_Sugar_Transport"/>
</dbReference>
<dbReference type="InterPro" id="IPR036095">
    <property type="entry name" value="PTS_EIIB-like_sf"/>
</dbReference>
<dbReference type="InterPro" id="IPR013011">
    <property type="entry name" value="PTS_EIIB_2"/>
</dbReference>
<dbReference type="InterPro" id="IPR003501">
    <property type="entry name" value="PTS_EIIB_2/3"/>
</dbReference>
<dbReference type="InterPro" id="IPR003352">
    <property type="entry name" value="PTS_EIIC"/>
</dbReference>
<dbReference type="InterPro" id="IPR013014">
    <property type="entry name" value="PTS_EIIC_2"/>
</dbReference>
<dbReference type="InterPro" id="IPR003353">
    <property type="entry name" value="PTS_IIB_fruc"/>
</dbReference>
<dbReference type="InterPro" id="IPR006327">
    <property type="entry name" value="PTS_IIC_fruc"/>
</dbReference>
<dbReference type="NCBIfam" id="TIGR00829">
    <property type="entry name" value="FRU"/>
    <property type="match status" value="1"/>
</dbReference>
<dbReference type="NCBIfam" id="NF007783">
    <property type="entry name" value="PRK10474.1"/>
    <property type="match status" value="2"/>
</dbReference>
<dbReference type="NCBIfam" id="NF007984">
    <property type="entry name" value="PRK10712.1"/>
    <property type="match status" value="1"/>
</dbReference>
<dbReference type="NCBIfam" id="TIGR01427">
    <property type="entry name" value="PTS_IIC_fructo"/>
    <property type="match status" value="1"/>
</dbReference>
<dbReference type="PANTHER" id="PTHR30505">
    <property type="entry name" value="FRUCTOSE-LIKE PERMEASE"/>
    <property type="match status" value="1"/>
</dbReference>
<dbReference type="PANTHER" id="PTHR30505:SF34">
    <property type="entry name" value="FRUCTOSE-LIKE PERMEASE IIC COMPONENT 2"/>
    <property type="match status" value="1"/>
</dbReference>
<dbReference type="Pfam" id="PF02378">
    <property type="entry name" value="PTS_EIIC"/>
    <property type="match status" value="1"/>
</dbReference>
<dbReference type="Pfam" id="PF02302">
    <property type="entry name" value="PTS_IIB"/>
    <property type="match status" value="2"/>
</dbReference>
<dbReference type="SUPFAM" id="SSF52794">
    <property type="entry name" value="PTS system IIB component-like"/>
    <property type="match status" value="2"/>
</dbReference>
<dbReference type="PROSITE" id="PS51099">
    <property type="entry name" value="PTS_EIIB_TYPE_2"/>
    <property type="match status" value="2"/>
</dbReference>
<dbReference type="PROSITE" id="PS51104">
    <property type="entry name" value="PTS_EIIC_TYPE_2"/>
    <property type="match status" value="1"/>
</dbReference>
<organism>
    <name type="scientific">Vibrio cholerae serotype O1 (strain ATCC 39315 / El Tor Inaba N16961)</name>
    <dbReference type="NCBI Taxonomy" id="243277"/>
    <lineage>
        <taxon>Bacteria</taxon>
        <taxon>Pseudomonadati</taxon>
        <taxon>Pseudomonadota</taxon>
        <taxon>Gammaproteobacteria</taxon>
        <taxon>Vibrionales</taxon>
        <taxon>Vibrionaceae</taxon>
        <taxon>Vibrio</taxon>
    </lineage>
</organism>
<keyword id="KW-0997">Cell inner membrane</keyword>
<keyword id="KW-1003">Cell membrane</keyword>
<keyword id="KW-0418">Kinase</keyword>
<keyword id="KW-0472">Membrane</keyword>
<keyword id="KW-0597">Phosphoprotein</keyword>
<keyword id="KW-0598">Phosphotransferase system</keyword>
<keyword id="KW-1185">Reference proteome</keyword>
<keyword id="KW-0677">Repeat</keyword>
<keyword id="KW-0762">Sugar transport</keyword>
<keyword id="KW-0808">Transferase</keyword>
<keyword id="KW-0812">Transmembrane</keyword>
<keyword id="KW-1133">Transmembrane helix</keyword>
<keyword id="KW-0813">Transport</keyword>
<accession>Q9KM72</accession>
<name>PTFBC_VIBCH</name>